<evidence type="ECO:0000255" key="1">
    <source>
        <dbReference type="HAMAP-Rule" id="MF_00215"/>
    </source>
</evidence>
<comment type="catalytic activity">
    <reaction evidence="1">
        <text>(R)-pantothenate + ATP = (R)-4'-phosphopantothenate + ADP + H(+)</text>
        <dbReference type="Rhea" id="RHEA:16373"/>
        <dbReference type="ChEBI" id="CHEBI:10986"/>
        <dbReference type="ChEBI" id="CHEBI:15378"/>
        <dbReference type="ChEBI" id="CHEBI:29032"/>
        <dbReference type="ChEBI" id="CHEBI:30616"/>
        <dbReference type="ChEBI" id="CHEBI:456216"/>
        <dbReference type="EC" id="2.7.1.33"/>
    </reaction>
</comment>
<comment type="pathway">
    <text evidence="1">Cofactor biosynthesis; coenzyme A biosynthesis; CoA from (R)-pantothenate: step 1/5.</text>
</comment>
<comment type="subcellular location">
    <subcellularLocation>
        <location evidence="1">Cytoplasm</location>
    </subcellularLocation>
</comment>
<comment type="similarity">
    <text evidence="1">Belongs to the prokaryotic pantothenate kinase family.</text>
</comment>
<dbReference type="EC" id="2.7.1.33" evidence="1"/>
<dbReference type="EMBL" id="BX571874">
    <property type="protein sequence ID" value="CAE17103.1"/>
    <property type="molecule type" value="Genomic_DNA"/>
</dbReference>
<dbReference type="RefSeq" id="WP_011148799.1">
    <property type="nucleotide sequence ID" value="NC_005126.1"/>
</dbReference>
<dbReference type="SMR" id="Q7MYE7"/>
<dbReference type="STRING" id="243265.plu4731"/>
<dbReference type="GeneID" id="48850960"/>
<dbReference type="KEGG" id="plu:plu4731"/>
<dbReference type="eggNOG" id="COG1072">
    <property type="taxonomic scope" value="Bacteria"/>
</dbReference>
<dbReference type="HOGENOM" id="CLU_053818_1_1_6"/>
<dbReference type="OrthoDB" id="1550976at2"/>
<dbReference type="UniPathway" id="UPA00241">
    <property type="reaction ID" value="UER00352"/>
</dbReference>
<dbReference type="Proteomes" id="UP000002514">
    <property type="component" value="Chromosome"/>
</dbReference>
<dbReference type="GO" id="GO:0005737">
    <property type="term" value="C:cytoplasm"/>
    <property type="evidence" value="ECO:0007669"/>
    <property type="project" value="UniProtKB-SubCell"/>
</dbReference>
<dbReference type="GO" id="GO:0005524">
    <property type="term" value="F:ATP binding"/>
    <property type="evidence" value="ECO:0007669"/>
    <property type="project" value="UniProtKB-UniRule"/>
</dbReference>
<dbReference type="GO" id="GO:0004594">
    <property type="term" value="F:pantothenate kinase activity"/>
    <property type="evidence" value="ECO:0007669"/>
    <property type="project" value="UniProtKB-UniRule"/>
</dbReference>
<dbReference type="GO" id="GO:0015937">
    <property type="term" value="P:coenzyme A biosynthetic process"/>
    <property type="evidence" value="ECO:0007669"/>
    <property type="project" value="UniProtKB-UniRule"/>
</dbReference>
<dbReference type="CDD" id="cd02025">
    <property type="entry name" value="PanK"/>
    <property type="match status" value="1"/>
</dbReference>
<dbReference type="FunFam" id="3.40.50.300:FF:000242">
    <property type="entry name" value="Pantothenate kinase"/>
    <property type="match status" value="1"/>
</dbReference>
<dbReference type="Gene3D" id="3.40.50.300">
    <property type="entry name" value="P-loop containing nucleotide triphosphate hydrolases"/>
    <property type="match status" value="1"/>
</dbReference>
<dbReference type="HAMAP" id="MF_00215">
    <property type="entry name" value="Pantothen_kinase_1"/>
    <property type="match status" value="1"/>
</dbReference>
<dbReference type="InterPro" id="IPR027417">
    <property type="entry name" value="P-loop_NTPase"/>
</dbReference>
<dbReference type="InterPro" id="IPR004566">
    <property type="entry name" value="PanK"/>
</dbReference>
<dbReference type="InterPro" id="IPR006083">
    <property type="entry name" value="PRK/URK"/>
</dbReference>
<dbReference type="NCBIfam" id="TIGR00554">
    <property type="entry name" value="panK_bact"/>
    <property type="match status" value="1"/>
</dbReference>
<dbReference type="PANTHER" id="PTHR10285">
    <property type="entry name" value="URIDINE KINASE"/>
    <property type="match status" value="1"/>
</dbReference>
<dbReference type="Pfam" id="PF00485">
    <property type="entry name" value="PRK"/>
    <property type="match status" value="1"/>
</dbReference>
<dbReference type="PIRSF" id="PIRSF000545">
    <property type="entry name" value="Pantothenate_kin"/>
    <property type="match status" value="1"/>
</dbReference>
<dbReference type="SUPFAM" id="SSF52540">
    <property type="entry name" value="P-loop containing nucleoside triphosphate hydrolases"/>
    <property type="match status" value="1"/>
</dbReference>
<proteinExistence type="inferred from homology"/>
<name>COAA_PHOLL</name>
<accession>Q7MYE7</accession>
<gene>
    <name evidence="1" type="primary">coaA</name>
    <name type="ordered locus">plu4731</name>
</gene>
<sequence length="316" mass="36165">MNKKEPFLATPYLQFNREQWATLRDSVPLTLTKEELIDLKGINEEISLEEVVEIYLPLSRLLNFYISSNLRRQAVLEQFLGTDGQKVPYVIGIAGSVAVGKSTTARLLQALLSRWPEHRSVELITTDGFLHSNSVLNERGLMKKKGFPQSYDMHSLVKFVSDIKSGSKQVSAPVYSHLTYDIVPNEQKFIKQPDILILEGLNVLQSGMDYPHDPHHVFVSDFVDFSIYVDAPEKLLKSWYISRFLKFRQGAFSDPDSYFHSYSKLSEEEAINTASDIWQEINGLNLRQNILPTRERASLIMTKGTNHTIESVRLRK</sequence>
<reference key="1">
    <citation type="journal article" date="2003" name="Nat. Biotechnol.">
        <title>The genome sequence of the entomopathogenic bacterium Photorhabdus luminescens.</title>
        <authorList>
            <person name="Duchaud E."/>
            <person name="Rusniok C."/>
            <person name="Frangeul L."/>
            <person name="Buchrieser C."/>
            <person name="Givaudan A."/>
            <person name="Taourit S."/>
            <person name="Bocs S."/>
            <person name="Boursaux-Eude C."/>
            <person name="Chandler M."/>
            <person name="Charles J.-F."/>
            <person name="Dassa E."/>
            <person name="Derose R."/>
            <person name="Derzelle S."/>
            <person name="Freyssinet G."/>
            <person name="Gaudriault S."/>
            <person name="Medigue C."/>
            <person name="Lanois A."/>
            <person name="Powell K."/>
            <person name="Siguier P."/>
            <person name="Vincent R."/>
            <person name="Wingate V."/>
            <person name="Zouine M."/>
            <person name="Glaser P."/>
            <person name="Boemare N."/>
            <person name="Danchin A."/>
            <person name="Kunst F."/>
        </authorList>
    </citation>
    <scope>NUCLEOTIDE SEQUENCE [LARGE SCALE GENOMIC DNA]</scope>
    <source>
        <strain>DSM 15139 / CIP 105565 / TT01</strain>
    </source>
</reference>
<protein>
    <recommendedName>
        <fullName evidence="1">Pantothenate kinase</fullName>
        <ecNumber evidence="1">2.7.1.33</ecNumber>
    </recommendedName>
    <alternativeName>
        <fullName evidence="1">Pantothenic acid kinase</fullName>
    </alternativeName>
</protein>
<keyword id="KW-0067">ATP-binding</keyword>
<keyword id="KW-0173">Coenzyme A biosynthesis</keyword>
<keyword id="KW-0963">Cytoplasm</keyword>
<keyword id="KW-0418">Kinase</keyword>
<keyword id="KW-0547">Nucleotide-binding</keyword>
<keyword id="KW-1185">Reference proteome</keyword>
<keyword id="KW-0808">Transferase</keyword>
<feature type="chain" id="PRO_0000194442" description="Pantothenate kinase">
    <location>
        <begin position="1"/>
        <end position="316"/>
    </location>
</feature>
<feature type="binding site" evidence="1">
    <location>
        <begin position="95"/>
        <end position="102"/>
    </location>
    <ligand>
        <name>ATP</name>
        <dbReference type="ChEBI" id="CHEBI:30616"/>
    </ligand>
</feature>
<organism>
    <name type="scientific">Photorhabdus laumondii subsp. laumondii (strain DSM 15139 / CIP 105565 / TT01)</name>
    <name type="common">Photorhabdus luminescens subsp. laumondii</name>
    <dbReference type="NCBI Taxonomy" id="243265"/>
    <lineage>
        <taxon>Bacteria</taxon>
        <taxon>Pseudomonadati</taxon>
        <taxon>Pseudomonadota</taxon>
        <taxon>Gammaproteobacteria</taxon>
        <taxon>Enterobacterales</taxon>
        <taxon>Morganellaceae</taxon>
        <taxon>Photorhabdus</taxon>
    </lineage>
</organism>